<feature type="chain" id="PRO_0000113995" description="Glutamyl-tRNA reductase">
    <location>
        <begin position="1"/>
        <end position="454"/>
    </location>
</feature>
<feature type="region of interest" description="Disordered" evidence="2">
    <location>
        <begin position="432"/>
        <end position="454"/>
    </location>
</feature>
<feature type="compositionally biased region" description="Basic and acidic residues" evidence="2">
    <location>
        <begin position="432"/>
        <end position="442"/>
    </location>
</feature>
<feature type="active site" description="Nucleophile" evidence="1">
    <location>
        <position position="50"/>
    </location>
</feature>
<feature type="binding site" evidence="1">
    <location>
        <begin position="49"/>
        <end position="52"/>
    </location>
    <ligand>
        <name>substrate</name>
    </ligand>
</feature>
<feature type="binding site" evidence="1">
    <location>
        <position position="109"/>
    </location>
    <ligand>
        <name>substrate</name>
    </ligand>
</feature>
<feature type="binding site" evidence="1">
    <location>
        <begin position="114"/>
        <end position="116"/>
    </location>
    <ligand>
        <name>substrate</name>
    </ligand>
</feature>
<feature type="binding site" evidence="1">
    <location>
        <position position="120"/>
    </location>
    <ligand>
        <name>substrate</name>
    </ligand>
</feature>
<feature type="binding site" evidence="1">
    <location>
        <begin position="189"/>
        <end position="194"/>
    </location>
    <ligand>
        <name>NADP(+)</name>
        <dbReference type="ChEBI" id="CHEBI:58349"/>
    </ligand>
</feature>
<feature type="site" description="Important for activity" evidence="1">
    <location>
        <position position="99"/>
    </location>
</feature>
<evidence type="ECO:0000255" key="1">
    <source>
        <dbReference type="HAMAP-Rule" id="MF_00087"/>
    </source>
</evidence>
<evidence type="ECO:0000256" key="2">
    <source>
        <dbReference type="SAM" id="MobiDB-lite"/>
    </source>
</evidence>
<accession>Q5WEP3</accession>
<reference key="1">
    <citation type="submission" date="2003-10" db="EMBL/GenBank/DDBJ databases">
        <title>The complete genome sequence of the alkaliphilic Bacillus clausii KSM-K16.</title>
        <authorList>
            <person name="Takaki Y."/>
            <person name="Kageyama Y."/>
            <person name="Shimamura S."/>
            <person name="Suzuki H."/>
            <person name="Nishi S."/>
            <person name="Hatada Y."/>
            <person name="Kawai S."/>
            <person name="Ito S."/>
            <person name="Horikoshi K."/>
        </authorList>
    </citation>
    <scope>NUCLEOTIDE SEQUENCE [LARGE SCALE GENOMIC DNA]</scope>
    <source>
        <strain>KSM-K16</strain>
    </source>
</reference>
<gene>
    <name evidence="1" type="primary">hemA</name>
    <name type="ordered locus">ABC2632</name>
</gene>
<comment type="function">
    <text evidence="1">Catalyzes the NADPH-dependent reduction of glutamyl-tRNA(Glu) to glutamate 1-semialdehyde (GSA).</text>
</comment>
<comment type="catalytic activity">
    <reaction evidence="1">
        <text>(S)-4-amino-5-oxopentanoate + tRNA(Glu) + NADP(+) = L-glutamyl-tRNA(Glu) + NADPH + H(+)</text>
        <dbReference type="Rhea" id="RHEA:12344"/>
        <dbReference type="Rhea" id="RHEA-COMP:9663"/>
        <dbReference type="Rhea" id="RHEA-COMP:9680"/>
        <dbReference type="ChEBI" id="CHEBI:15378"/>
        <dbReference type="ChEBI" id="CHEBI:57501"/>
        <dbReference type="ChEBI" id="CHEBI:57783"/>
        <dbReference type="ChEBI" id="CHEBI:58349"/>
        <dbReference type="ChEBI" id="CHEBI:78442"/>
        <dbReference type="ChEBI" id="CHEBI:78520"/>
        <dbReference type="EC" id="1.2.1.70"/>
    </reaction>
</comment>
<comment type="pathway">
    <text evidence="1">Porphyrin-containing compound metabolism; protoporphyrin-IX biosynthesis; 5-aminolevulinate from L-glutamyl-tRNA(Glu): step 1/2.</text>
</comment>
<comment type="subunit">
    <text evidence="1">Homodimer.</text>
</comment>
<comment type="domain">
    <text evidence="1">Possesses an unusual extended V-shaped dimeric structure with each monomer consisting of three distinct domains arranged along a curved 'spinal' alpha-helix. The N-terminal catalytic domain specifically recognizes the glutamate moiety of the substrate. The second domain is the NADPH-binding domain, and the third C-terminal domain is responsible for dimerization.</text>
</comment>
<comment type="miscellaneous">
    <text evidence="1">During catalysis, the active site Cys acts as a nucleophile attacking the alpha-carbonyl group of tRNA-bound glutamate with the formation of a thioester intermediate between enzyme and glutamate, and the concomitant release of tRNA(Glu). The thioester intermediate is finally reduced by direct hydride transfer from NADPH, to form the product GSA.</text>
</comment>
<comment type="similarity">
    <text evidence="1">Belongs to the glutamyl-tRNA reductase family.</text>
</comment>
<keyword id="KW-0521">NADP</keyword>
<keyword id="KW-0560">Oxidoreductase</keyword>
<keyword id="KW-0627">Porphyrin biosynthesis</keyword>
<keyword id="KW-1185">Reference proteome</keyword>
<protein>
    <recommendedName>
        <fullName evidence="1">Glutamyl-tRNA reductase</fullName>
        <shortName evidence="1">GluTR</shortName>
        <ecNumber evidence="1">1.2.1.70</ecNumber>
    </recommendedName>
</protein>
<name>HEM1_SHOC1</name>
<organism>
    <name type="scientific">Shouchella clausii (strain KSM-K16)</name>
    <name type="common">Alkalihalobacillus clausii</name>
    <dbReference type="NCBI Taxonomy" id="66692"/>
    <lineage>
        <taxon>Bacteria</taxon>
        <taxon>Bacillati</taxon>
        <taxon>Bacillota</taxon>
        <taxon>Bacilli</taxon>
        <taxon>Bacillales</taxon>
        <taxon>Bacillaceae</taxon>
        <taxon>Shouchella</taxon>
    </lineage>
</organism>
<proteinExistence type="inferred from homology"/>
<dbReference type="EC" id="1.2.1.70" evidence="1"/>
<dbReference type="EMBL" id="AP006627">
    <property type="protein sequence ID" value="BAD65167.1"/>
    <property type="molecule type" value="Genomic_DNA"/>
</dbReference>
<dbReference type="RefSeq" id="WP_011247475.1">
    <property type="nucleotide sequence ID" value="NC_006582.1"/>
</dbReference>
<dbReference type="SMR" id="Q5WEP3"/>
<dbReference type="STRING" id="66692.ABC2632"/>
<dbReference type="KEGG" id="bcl:ABC2632"/>
<dbReference type="eggNOG" id="COG0373">
    <property type="taxonomic scope" value="Bacteria"/>
</dbReference>
<dbReference type="HOGENOM" id="CLU_035113_2_2_9"/>
<dbReference type="OrthoDB" id="110209at2"/>
<dbReference type="UniPathway" id="UPA00251">
    <property type="reaction ID" value="UER00316"/>
</dbReference>
<dbReference type="Proteomes" id="UP000001168">
    <property type="component" value="Chromosome"/>
</dbReference>
<dbReference type="GO" id="GO:0008883">
    <property type="term" value="F:glutamyl-tRNA reductase activity"/>
    <property type="evidence" value="ECO:0007669"/>
    <property type="project" value="UniProtKB-UniRule"/>
</dbReference>
<dbReference type="GO" id="GO:0050661">
    <property type="term" value="F:NADP binding"/>
    <property type="evidence" value="ECO:0007669"/>
    <property type="project" value="InterPro"/>
</dbReference>
<dbReference type="GO" id="GO:0019353">
    <property type="term" value="P:protoporphyrinogen IX biosynthetic process from glutamate"/>
    <property type="evidence" value="ECO:0007669"/>
    <property type="project" value="TreeGrafter"/>
</dbReference>
<dbReference type="CDD" id="cd05213">
    <property type="entry name" value="NAD_bind_Glutamyl_tRNA_reduct"/>
    <property type="match status" value="1"/>
</dbReference>
<dbReference type="FunFam" id="3.30.460.30:FF:000001">
    <property type="entry name" value="Glutamyl-tRNA reductase"/>
    <property type="match status" value="1"/>
</dbReference>
<dbReference type="FunFam" id="3.40.50.720:FF:000031">
    <property type="entry name" value="Glutamyl-tRNA reductase"/>
    <property type="match status" value="1"/>
</dbReference>
<dbReference type="Gene3D" id="3.30.460.30">
    <property type="entry name" value="Glutamyl-tRNA reductase, N-terminal domain"/>
    <property type="match status" value="1"/>
</dbReference>
<dbReference type="Gene3D" id="3.40.50.720">
    <property type="entry name" value="NAD(P)-binding Rossmann-like Domain"/>
    <property type="match status" value="1"/>
</dbReference>
<dbReference type="HAMAP" id="MF_00087">
    <property type="entry name" value="Glu_tRNA_reductase"/>
    <property type="match status" value="1"/>
</dbReference>
<dbReference type="InterPro" id="IPR000343">
    <property type="entry name" value="4pyrrol_synth_GluRdtase"/>
</dbReference>
<dbReference type="InterPro" id="IPR015896">
    <property type="entry name" value="4pyrrol_synth_GluRdtase_dimer"/>
</dbReference>
<dbReference type="InterPro" id="IPR015895">
    <property type="entry name" value="4pyrrol_synth_GluRdtase_N"/>
</dbReference>
<dbReference type="InterPro" id="IPR018214">
    <property type="entry name" value="GluRdtase_CS"/>
</dbReference>
<dbReference type="InterPro" id="IPR036453">
    <property type="entry name" value="GluRdtase_dimer_dom_sf"/>
</dbReference>
<dbReference type="InterPro" id="IPR036343">
    <property type="entry name" value="GluRdtase_N_sf"/>
</dbReference>
<dbReference type="InterPro" id="IPR036291">
    <property type="entry name" value="NAD(P)-bd_dom_sf"/>
</dbReference>
<dbReference type="InterPro" id="IPR006151">
    <property type="entry name" value="Shikm_DH/Glu-tRNA_Rdtase"/>
</dbReference>
<dbReference type="NCBIfam" id="TIGR01035">
    <property type="entry name" value="hemA"/>
    <property type="match status" value="1"/>
</dbReference>
<dbReference type="NCBIfam" id="NF000744">
    <property type="entry name" value="PRK00045.1-3"/>
    <property type="match status" value="1"/>
</dbReference>
<dbReference type="PANTHER" id="PTHR43013">
    <property type="entry name" value="GLUTAMYL-TRNA REDUCTASE"/>
    <property type="match status" value="1"/>
</dbReference>
<dbReference type="PANTHER" id="PTHR43013:SF1">
    <property type="entry name" value="GLUTAMYL-TRNA REDUCTASE"/>
    <property type="match status" value="1"/>
</dbReference>
<dbReference type="Pfam" id="PF00745">
    <property type="entry name" value="GlutR_dimer"/>
    <property type="match status" value="1"/>
</dbReference>
<dbReference type="Pfam" id="PF05201">
    <property type="entry name" value="GlutR_N"/>
    <property type="match status" value="1"/>
</dbReference>
<dbReference type="Pfam" id="PF01488">
    <property type="entry name" value="Shikimate_DH"/>
    <property type="match status" value="1"/>
</dbReference>
<dbReference type="PIRSF" id="PIRSF000445">
    <property type="entry name" value="4pyrrol_synth_GluRdtase"/>
    <property type="match status" value="1"/>
</dbReference>
<dbReference type="SUPFAM" id="SSF69742">
    <property type="entry name" value="Glutamyl tRNA-reductase catalytic, N-terminal domain"/>
    <property type="match status" value="1"/>
</dbReference>
<dbReference type="SUPFAM" id="SSF69075">
    <property type="entry name" value="Glutamyl tRNA-reductase dimerization domain"/>
    <property type="match status" value="1"/>
</dbReference>
<dbReference type="SUPFAM" id="SSF51735">
    <property type="entry name" value="NAD(P)-binding Rossmann-fold domains"/>
    <property type="match status" value="1"/>
</dbReference>
<dbReference type="PROSITE" id="PS00747">
    <property type="entry name" value="GLUTR"/>
    <property type="match status" value="1"/>
</dbReference>
<sequence>MHTIAIGLNYKTAPVEIREKLVFSEHQLPEALKKLRSSKSMMECVILSTCNRTELYVVADQLHTGRYFAKAFLAEWFSVDMEDVTPYLVIRENDHAIEHLFRVACGLDSMVIGETQILGQVKQAFLLAQEEKVTGTVFNQLFKQAVTLGKRVHSSTEISSQAVSVSYAGVELGKKIFGTFSGKHVLILGAGKMSELTAKHLYANGAASISVMNRTKENAVELASQFAGTARSFAELNDALKEADVVISSTGARDFVVTKENAADALKKRKGRPLFAIDIAVPRDIDPEIATISDVYLYDIDDLQNIVETNKKERKKEAEKIGVMIEAEIDDFKAWLNTLGVVPLITALREKALQIQGDTMESIERKLPHLSERDIKVLNKHTKSIVNQLLRDPLTRVKELAAEPDAKHSLELFKTIFALEAQIELAEKAEADHAEQSWKEGQRPSLNQGMALRT</sequence>